<keyword id="KW-0131">Cell cycle</keyword>
<keyword id="KW-0132">Cell division</keyword>
<keyword id="KW-0997">Cell inner membrane</keyword>
<keyword id="KW-1003">Cell membrane</keyword>
<keyword id="KW-0133">Cell shape</keyword>
<keyword id="KW-0961">Cell wall biogenesis/degradation</keyword>
<keyword id="KW-0328">Glycosyltransferase</keyword>
<keyword id="KW-0472">Membrane</keyword>
<keyword id="KW-0573">Peptidoglycan synthesis</keyword>
<keyword id="KW-0808">Transferase</keyword>
<reference key="1">
    <citation type="journal article" date="2006" name="Genome Biol.">
        <title>Genomic analysis reveals that Pseudomonas aeruginosa virulence is combinatorial.</title>
        <authorList>
            <person name="Lee D.G."/>
            <person name="Urbach J.M."/>
            <person name="Wu G."/>
            <person name="Liberati N.T."/>
            <person name="Feinbaum R.L."/>
            <person name="Miyata S."/>
            <person name="Diggins L.T."/>
            <person name="He J."/>
            <person name="Saucier M."/>
            <person name="Deziel E."/>
            <person name="Friedman L."/>
            <person name="Li L."/>
            <person name="Grills G."/>
            <person name="Montgomery K."/>
            <person name="Kucherlapati R."/>
            <person name="Rahme L.G."/>
            <person name="Ausubel F.M."/>
        </authorList>
    </citation>
    <scope>NUCLEOTIDE SEQUENCE [LARGE SCALE GENOMIC DNA]</scope>
    <source>
        <strain>UCBPP-PA14</strain>
    </source>
</reference>
<accession>Q02H28</accession>
<protein>
    <recommendedName>
        <fullName evidence="1">UDP-N-acetylglucosamine--N-acetylmuramyl-(pentapeptide) pyrophosphoryl-undecaprenol N-acetylglucosamine transferase</fullName>
        <ecNumber evidence="1">2.4.1.227</ecNumber>
    </recommendedName>
    <alternativeName>
        <fullName evidence="1">Undecaprenyl-PP-MurNAc-pentapeptide-UDPGlcNAc GlcNAc transferase</fullName>
    </alternativeName>
</protein>
<comment type="function">
    <text evidence="1">Cell wall formation. Catalyzes the transfer of a GlcNAc subunit on undecaprenyl-pyrophosphoryl-MurNAc-pentapeptide (lipid intermediate I) to form undecaprenyl-pyrophosphoryl-MurNAc-(pentapeptide)GlcNAc (lipid intermediate II).</text>
</comment>
<comment type="catalytic activity">
    <reaction evidence="1">
        <text>di-trans,octa-cis-undecaprenyl diphospho-N-acetyl-alpha-D-muramoyl-L-alanyl-D-glutamyl-meso-2,6-diaminopimeloyl-D-alanyl-D-alanine + UDP-N-acetyl-alpha-D-glucosamine = di-trans,octa-cis-undecaprenyl diphospho-[N-acetyl-alpha-D-glucosaminyl-(1-&gt;4)]-N-acetyl-alpha-D-muramoyl-L-alanyl-D-glutamyl-meso-2,6-diaminopimeloyl-D-alanyl-D-alanine + UDP + H(+)</text>
        <dbReference type="Rhea" id="RHEA:31227"/>
        <dbReference type="ChEBI" id="CHEBI:15378"/>
        <dbReference type="ChEBI" id="CHEBI:57705"/>
        <dbReference type="ChEBI" id="CHEBI:58223"/>
        <dbReference type="ChEBI" id="CHEBI:61387"/>
        <dbReference type="ChEBI" id="CHEBI:61388"/>
        <dbReference type="EC" id="2.4.1.227"/>
    </reaction>
</comment>
<comment type="pathway">
    <text evidence="1">Cell wall biogenesis; peptidoglycan biosynthesis.</text>
</comment>
<comment type="subcellular location">
    <subcellularLocation>
        <location evidence="1">Cell inner membrane</location>
        <topology evidence="1">Peripheral membrane protein</topology>
        <orientation evidence="1">Cytoplasmic side</orientation>
    </subcellularLocation>
</comment>
<comment type="similarity">
    <text evidence="1">Belongs to the glycosyltransferase 28 family. MurG subfamily.</text>
</comment>
<evidence type="ECO:0000255" key="1">
    <source>
        <dbReference type="HAMAP-Rule" id="MF_00033"/>
    </source>
</evidence>
<dbReference type="EC" id="2.4.1.227" evidence="1"/>
<dbReference type="EMBL" id="CP000438">
    <property type="protein sequence ID" value="ABJ13682.1"/>
    <property type="molecule type" value="Genomic_DNA"/>
</dbReference>
<dbReference type="RefSeq" id="WP_003103107.1">
    <property type="nucleotide sequence ID" value="NZ_CP034244.1"/>
</dbReference>
<dbReference type="SMR" id="Q02H28"/>
<dbReference type="CAZy" id="GT28">
    <property type="family name" value="Glycosyltransferase Family 28"/>
</dbReference>
<dbReference type="KEGG" id="pau:PA14_57340"/>
<dbReference type="PseudoCAP" id="PA14_57340"/>
<dbReference type="HOGENOM" id="CLU_037404_2_0_6"/>
<dbReference type="BioCyc" id="PAER208963:G1G74-4829-MONOMER"/>
<dbReference type="UniPathway" id="UPA00219"/>
<dbReference type="Proteomes" id="UP000000653">
    <property type="component" value="Chromosome"/>
</dbReference>
<dbReference type="GO" id="GO:0005886">
    <property type="term" value="C:plasma membrane"/>
    <property type="evidence" value="ECO:0007669"/>
    <property type="project" value="UniProtKB-SubCell"/>
</dbReference>
<dbReference type="GO" id="GO:0051991">
    <property type="term" value="F:UDP-N-acetyl-D-glucosamine:N-acetylmuramoyl-L-alanyl-D-glutamyl-meso-2,6-diaminopimelyl-D-alanyl-D-alanine-diphosphoundecaprenol 4-beta-N-acetylglucosaminlytransferase activity"/>
    <property type="evidence" value="ECO:0007669"/>
    <property type="project" value="RHEA"/>
</dbReference>
<dbReference type="GO" id="GO:0050511">
    <property type="term" value="F:undecaprenyldiphospho-muramoylpentapeptide beta-N-acetylglucosaminyltransferase activity"/>
    <property type="evidence" value="ECO:0007669"/>
    <property type="project" value="UniProtKB-UniRule"/>
</dbReference>
<dbReference type="GO" id="GO:0005975">
    <property type="term" value="P:carbohydrate metabolic process"/>
    <property type="evidence" value="ECO:0007669"/>
    <property type="project" value="InterPro"/>
</dbReference>
<dbReference type="GO" id="GO:0051301">
    <property type="term" value="P:cell division"/>
    <property type="evidence" value="ECO:0007669"/>
    <property type="project" value="UniProtKB-KW"/>
</dbReference>
<dbReference type="GO" id="GO:0071555">
    <property type="term" value="P:cell wall organization"/>
    <property type="evidence" value="ECO:0007669"/>
    <property type="project" value="UniProtKB-KW"/>
</dbReference>
<dbReference type="GO" id="GO:0030259">
    <property type="term" value="P:lipid glycosylation"/>
    <property type="evidence" value="ECO:0007669"/>
    <property type="project" value="UniProtKB-UniRule"/>
</dbReference>
<dbReference type="GO" id="GO:0009252">
    <property type="term" value="P:peptidoglycan biosynthetic process"/>
    <property type="evidence" value="ECO:0007669"/>
    <property type="project" value="UniProtKB-UniRule"/>
</dbReference>
<dbReference type="GO" id="GO:0008360">
    <property type="term" value="P:regulation of cell shape"/>
    <property type="evidence" value="ECO:0007669"/>
    <property type="project" value="UniProtKB-KW"/>
</dbReference>
<dbReference type="CDD" id="cd03785">
    <property type="entry name" value="GT28_MurG"/>
    <property type="match status" value="1"/>
</dbReference>
<dbReference type="Gene3D" id="3.40.50.2000">
    <property type="entry name" value="Glycogen Phosphorylase B"/>
    <property type="match status" value="2"/>
</dbReference>
<dbReference type="HAMAP" id="MF_00033">
    <property type="entry name" value="MurG"/>
    <property type="match status" value="1"/>
</dbReference>
<dbReference type="InterPro" id="IPR006009">
    <property type="entry name" value="GlcNAc_MurG"/>
</dbReference>
<dbReference type="InterPro" id="IPR007235">
    <property type="entry name" value="Glyco_trans_28_C"/>
</dbReference>
<dbReference type="InterPro" id="IPR004276">
    <property type="entry name" value="GlycoTrans_28_N"/>
</dbReference>
<dbReference type="NCBIfam" id="TIGR01133">
    <property type="entry name" value="murG"/>
    <property type="match status" value="1"/>
</dbReference>
<dbReference type="PANTHER" id="PTHR21015:SF22">
    <property type="entry name" value="GLYCOSYLTRANSFERASE"/>
    <property type="match status" value="1"/>
</dbReference>
<dbReference type="PANTHER" id="PTHR21015">
    <property type="entry name" value="UDP-N-ACETYLGLUCOSAMINE--N-ACETYLMURAMYL-(PENTAPEPTIDE) PYROPHOSPHORYL-UNDECAPRENOL N-ACETYLGLUCOSAMINE TRANSFERASE 1"/>
    <property type="match status" value="1"/>
</dbReference>
<dbReference type="Pfam" id="PF04101">
    <property type="entry name" value="Glyco_tran_28_C"/>
    <property type="match status" value="1"/>
</dbReference>
<dbReference type="Pfam" id="PF03033">
    <property type="entry name" value="Glyco_transf_28"/>
    <property type="match status" value="1"/>
</dbReference>
<dbReference type="SUPFAM" id="SSF53756">
    <property type="entry name" value="UDP-Glycosyltransferase/glycogen phosphorylase"/>
    <property type="match status" value="1"/>
</dbReference>
<gene>
    <name evidence="1" type="primary">murG</name>
    <name type="ordered locus">PA14_57340</name>
</gene>
<organism>
    <name type="scientific">Pseudomonas aeruginosa (strain UCBPP-PA14)</name>
    <dbReference type="NCBI Taxonomy" id="208963"/>
    <lineage>
        <taxon>Bacteria</taxon>
        <taxon>Pseudomonadati</taxon>
        <taxon>Pseudomonadota</taxon>
        <taxon>Gammaproteobacteria</taxon>
        <taxon>Pseudomonadales</taxon>
        <taxon>Pseudomonadaceae</taxon>
        <taxon>Pseudomonas</taxon>
    </lineage>
</organism>
<proteinExistence type="inferred from homology"/>
<feature type="chain" id="PRO_1000002679" description="UDP-N-acetylglucosamine--N-acetylmuramyl-(pentapeptide) pyrophosphoryl-undecaprenol N-acetylglucosamine transferase">
    <location>
        <begin position="1"/>
        <end position="357"/>
    </location>
</feature>
<feature type="binding site" evidence="1">
    <location>
        <begin position="12"/>
        <end position="14"/>
    </location>
    <ligand>
        <name>UDP-N-acetyl-alpha-D-glucosamine</name>
        <dbReference type="ChEBI" id="CHEBI:57705"/>
    </ligand>
</feature>
<feature type="binding site" evidence="1">
    <location>
        <position position="124"/>
    </location>
    <ligand>
        <name>UDP-N-acetyl-alpha-D-glucosamine</name>
        <dbReference type="ChEBI" id="CHEBI:57705"/>
    </ligand>
</feature>
<feature type="binding site" evidence="1">
    <location>
        <position position="163"/>
    </location>
    <ligand>
        <name>UDP-N-acetyl-alpha-D-glucosamine</name>
        <dbReference type="ChEBI" id="CHEBI:57705"/>
    </ligand>
</feature>
<feature type="binding site" evidence="1">
    <location>
        <position position="189"/>
    </location>
    <ligand>
        <name>UDP-N-acetyl-alpha-D-glucosamine</name>
        <dbReference type="ChEBI" id="CHEBI:57705"/>
    </ligand>
</feature>
<feature type="binding site" evidence="1">
    <location>
        <position position="243"/>
    </location>
    <ligand>
        <name>UDP-N-acetyl-alpha-D-glucosamine</name>
        <dbReference type="ChEBI" id="CHEBI:57705"/>
    </ligand>
</feature>
<feature type="binding site" evidence="1">
    <location>
        <begin position="262"/>
        <end position="267"/>
    </location>
    <ligand>
        <name>UDP-N-acetyl-alpha-D-glucosamine</name>
        <dbReference type="ChEBI" id="CHEBI:57705"/>
    </ligand>
</feature>
<feature type="binding site" evidence="1">
    <location>
        <position position="288"/>
    </location>
    <ligand>
        <name>UDP-N-acetyl-alpha-D-glucosamine</name>
        <dbReference type="ChEBI" id="CHEBI:57705"/>
    </ligand>
</feature>
<sequence length="357" mass="37799">MKGNVLIMAGGTGGHVFPALACAREFQARGYAVHWLGTPRGIENDLVPKAGLPLHLIQVSGLRGKGLKSLVKAPLELLKSLFQALRVIRQLRPVCVLGLGGYVTGPGGLAARLNGVPLVIHEQNAVAGTANRSLAPIARRVCEAFPDTFPASDKRLTTGNPVRGELFLDAHARAPLTGRRVNLLVLGGSLGAEPLNKLLPEALAQVPLEIRPAIRHQAGRQHAEITAERYRTVAVEADVAPFISDMAAAYAWADLVICRAGALTVSELTAAGLPAFLVPLPHAIDDHQTRNAEFLVRSGAGRLLPQKSTGAAELAAQLSEVLMHPETLRSMADQARSLAKPEATRTVVDACLEVARG</sequence>
<name>MURG_PSEAB</name>